<feature type="chain" id="PRO_0000047774" description="Zinc finger imprinted 2">
    <location>
        <begin position="1"/>
        <end position="527"/>
    </location>
</feature>
<feature type="domain" description="KRAB" evidence="2">
    <location>
        <begin position="176"/>
        <end position="246"/>
    </location>
</feature>
<feature type="zinc finger region" description="C2H2-type 1" evidence="1">
    <location>
        <begin position="328"/>
        <end position="350"/>
    </location>
</feature>
<feature type="zinc finger region" description="C2H2-type 2" evidence="1">
    <location>
        <begin position="356"/>
        <end position="378"/>
    </location>
</feature>
<feature type="zinc finger region" description="C2H2-type 3" evidence="1">
    <location>
        <begin position="412"/>
        <end position="434"/>
    </location>
</feature>
<feature type="zinc finger region" description="C2H2-type 4" evidence="1">
    <location>
        <begin position="466"/>
        <end position="488"/>
    </location>
</feature>
<feature type="zinc finger region" description="C2H2-type 5" evidence="1">
    <location>
        <begin position="494"/>
        <end position="516"/>
    </location>
</feature>
<feature type="region of interest" description="Disordered" evidence="3">
    <location>
        <begin position="1"/>
        <end position="104"/>
    </location>
</feature>
<feature type="region of interest" description="Disordered" evidence="3">
    <location>
        <begin position="247"/>
        <end position="322"/>
    </location>
</feature>
<feature type="compositionally biased region" description="Acidic residues" evidence="3">
    <location>
        <begin position="1"/>
        <end position="16"/>
    </location>
</feature>
<feature type="compositionally biased region" description="Basic and acidic residues" evidence="3">
    <location>
        <begin position="17"/>
        <end position="26"/>
    </location>
</feature>
<feature type="compositionally biased region" description="Basic and acidic residues" evidence="3">
    <location>
        <begin position="35"/>
        <end position="56"/>
    </location>
</feature>
<feature type="compositionally biased region" description="Basic and acidic residues" evidence="3">
    <location>
        <begin position="80"/>
        <end position="99"/>
    </location>
</feature>
<feature type="compositionally biased region" description="Polar residues" evidence="3">
    <location>
        <begin position="259"/>
        <end position="275"/>
    </location>
</feature>
<feature type="compositionally biased region" description="Basic and acidic residues" evidence="3">
    <location>
        <begin position="297"/>
        <end position="307"/>
    </location>
</feature>
<feature type="sequence variant" id="VAR_021896" description="In dbSNP:rs2191432.">
    <original>A</original>
    <variation>T</variation>
    <location>
        <position position="110"/>
    </location>
</feature>
<feature type="sequence variant" id="VAR_052931" description="In dbSNP:rs8112407.">
    <original>Q</original>
    <variation>R</variation>
    <location>
        <position position="408"/>
    </location>
</feature>
<feature type="sequence variant" id="VAR_052932" description="In dbSNP:rs10422475.">
    <original>R</original>
    <variation>K</variation>
    <location>
        <position position="473"/>
    </location>
</feature>
<comment type="function">
    <text>May be involved in transcriptional regulation.</text>
</comment>
<comment type="interaction">
    <interactant intactId="EBI-11962760">
        <id>Q9NZV7</id>
    </interactant>
    <interactant intactId="EBI-745213">
        <id>P29972</id>
        <label>AQP1</label>
    </interactant>
    <organismsDiffer>false</organismsDiffer>
    <experiments>3</experiments>
</comment>
<comment type="interaction">
    <interactant intactId="EBI-11962760">
        <id>Q9NZV7</id>
    </interactant>
    <interactant intactId="EBI-2949658">
        <id>O95429</id>
        <label>BAG4</label>
    </interactant>
    <organismsDiffer>false</organismsDiffer>
    <experiments>3</experiments>
</comment>
<comment type="interaction">
    <interactant intactId="EBI-11962760">
        <id>Q9NZV7</id>
    </interactant>
    <interactant intactId="EBI-2548012">
        <id>Q9H2G9</id>
        <label>BLZF1</label>
    </interactant>
    <organismsDiffer>false</organismsDiffer>
    <experiments>3</experiments>
</comment>
<comment type="interaction">
    <interactant intactId="EBI-11962760">
        <id>Q9NZV7</id>
    </interactant>
    <interactant intactId="EBI-744545">
        <id>Q8NEC5</id>
        <label>CATSPER1</label>
    </interactant>
    <organismsDiffer>false</organismsDiffer>
    <experiments>5</experiments>
</comment>
<comment type="interaction">
    <interactant intactId="EBI-11962760">
        <id>Q9NZV7</id>
    </interactant>
    <interactant intactId="EBI-744556">
        <id>Q96HB5</id>
        <label>CCDC120</label>
    </interactant>
    <organismsDiffer>false</organismsDiffer>
    <experiments>3</experiments>
</comment>
<comment type="interaction">
    <interactant intactId="EBI-11962760">
        <id>Q9NZV7</id>
    </interactant>
    <interactant intactId="EBI-6255981">
        <id>Q7L775</id>
        <label>EPM2AIP1</label>
    </interactant>
    <organismsDiffer>false</organismsDiffer>
    <experiments>6</experiments>
</comment>
<comment type="interaction">
    <interactant intactId="EBI-11962760">
        <id>Q9NZV7</id>
    </interactant>
    <interactant intactId="EBI-719941">
        <id>Q3B820</id>
        <label>FAM161A</label>
    </interactant>
    <organismsDiffer>false</organismsDiffer>
    <experiments>3</experiments>
</comment>
<comment type="interaction">
    <interactant intactId="EBI-11962760">
        <id>Q9NZV7</id>
    </interactant>
    <interactant intactId="EBI-748515">
        <id>Q8IVS8</id>
        <label>GLYCTK</label>
    </interactant>
    <organismsDiffer>false</organismsDiffer>
    <experiments>3</experiments>
</comment>
<comment type="interaction">
    <interactant intactId="EBI-11962760">
        <id>Q9NZV7</id>
    </interactant>
    <interactant intactId="EBI-2548508">
        <id>Q96IK5</id>
        <label>GMCL1</label>
    </interactant>
    <organismsDiffer>false</organismsDiffer>
    <experiments>3</experiments>
</comment>
<comment type="interaction">
    <interactant intactId="EBI-11962760">
        <id>Q9NZV7</id>
    </interactant>
    <interactant intactId="EBI-740785">
        <id>P49639</id>
        <label>HOXA1</label>
    </interactant>
    <organismsDiffer>false</organismsDiffer>
    <experiments>3</experiments>
</comment>
<comment type="interaction">
    <interactant intactId="EBI-11962760">
        <id>Q9NZV7</id>
    </interactant>
    <interactant intactId="EBI-17178971">
        <id>Q14005-2</id>
        <label>IL16</label>
    </interactant>
    <organismsDiffer>false</organismsDiffer>
    <experiments>3</experiments>
</comment>
<comment type="interaction">
    <interactant intactId="EBI-11962760">
        <id>Q9NZV7</id>
    </interactant>
    <interactant intactId="EBI-12012928">
        <id>P60371</id>
        <label>KRTAP10-6</label>
    </interactant>
    <organismsDiffer>false</organismsDiffer>
    <experiments>3</experiments>
</comment>
<comment type="interaction">
    <interactant intactId="EBI-11962760">
        <id>Q9NZV7</id>
    </interactant>
    <interactant intactId="EBI-10172290">
        <id>P60409</id>
        <label>KRTAP10-7</label>
    </interactant>
    <organismsDiffer>false</organismsDiffer>
    <experiments>3</experiments>
</comment>
<comment type="interaction">
    <interactant intactId="EBI-11962760">
        <id>Q9NZV7</id>
    </interactant>
    <interactant intactId="EBI-10176379">
        <id>P59991</id>
        <label>KRTAP12-2</label>
    </interactant>
    <organismsDiffer>false</organismsDiffer>
    <experiments>3</experiments>
</comment>
<comment type="interaction">
    <interactant intactId="EBI-11962760">
        <id>Q9NZV7</id>
    </interactant>
    <interactant intactId="EBI-14065470">
        <id>Q9BYR9</id>
        <label>KRTAP2-4</label>
    </interactant>
    <organismsDiffer>false</organismsDiffer>
    <experiments>3</experiments>
</comment>
<comment type="interaction">
    <interactant intactId="EBI-11962760">
        <id>Q9NZV7</id>
    </interactant>
    <interactant intactId="EBI-751260">
        <id>Q9BYR7</id>
        <label>KRTAP3-2</label>
    </interactant>
    <organismsDiffer>false</organismsDiffer>
    <experiments>3</experiments>
</comment>
<comment type="interaction">
    <interactant intactId="EBI-11962760">
        <id>Q9NZV7</id>
    </interactant>
    <interactant intactId="EBI-12864460">
        <id>P48059-3</id>
        <label>LIMS1</label>
    </interactant>
    <organismsDiffer>false</organismsDiffer>
    <experiments>3</experiments>
</comment>
<comment type="interaction">
    <interactant intactId="EBI-11962760">
        <id>Q9NZV7</id>
    </interactant>
    <interactant intactId="EBI-724076">
        <id>Q99750</id>
        <label>MDFI</label>
    </interactant>
    <organismsDiffer>false</organismsDiffer>
    <experiments>3</experiments>
</comment>
<comment type="interaction">
    <interactant intactId="EBI-11962760">
        <id>Q9NZV7</id>
    </interactant>
    <interactant intactId="EBI-10172526">
        <id>Q9UJV3-2</id>
        <label>MID2</label>
    </interactant>
    <organismsDiffer>false</organismsDiffer>
    <experiments>3</experiments>
</comment>
<comment type="interaction">
    <interactant intactId="EBI-11962760">
        <id>Q9NZV7</id>
    </interactant>
    <interactant intactId="EBI-2340269">
        <id>Q13064</id>
        <label>MKRN3</label>
    </interactant>
    <organismsDiffer>false</organismsDiffer>
    <experiments>3</experiments>
</comment>
<comment type="interaction">
    <interactant intactId="EBI-11962760">
        <id>Q9NZV7</id>
    </interactant>
    <interactant intactId="EBI-11022007">
        <id>Q9HBE1-4</id>
        <label>PATZ1</label>
    </interactant>
    <organismsDiffer>false</organismsDiffer>
    <experiments>3</experiments>
</comment>
<comment type="interaction">
    <interactant intactId="EBI-11962760">
        <id>Q9NZV7</id>
    </interactant>
    <interactant intactId="EBI-530034">
        <id>O43189</id>
        <label>PHF1</label>
    </interactant>
    <organismsDiffer>false</organismsDiffer>
    <experiments>3</experiments>
</comment>
<comment type="interaction">
    <interactant intactId="EBI-11962760">
        <id>Q9NZV7</id>
    </interactant>
    <interactant intactId="EBI-1055079">
        <id>O15160</id>
        <label>POLR1C</label>
    </interactant>
    <organismsDiffer>false</organismsDiffer>
    <experiments>5</experiments>
</comment>
<comment type="interaction">
    <interactant intactId="EBI-11962760">
        <id>Q9NZV7</id>
    </interactant>
    <interactant intactId="EBI-12029004">
        <id>P78424</id>
        <label>POU6F2</label>
    </interactant>
    <organismsDiffer>false</organismsDiffer>
    <experiments>3</experiments>
</comment>
<comment type="interaction">
    <interactant intactId="EBI-11962760">
        <id>Q9NZV7</id>
    </interactant>
    <interactant intactId="EBI-748391">
        <id>Q9BWG6</id>
        <label>SCNM1</label>
    </interactant>
    <organismsDiffer>false</organismsDiffer>
    <experiments>3</experiments>
</comment>
<comment type="interaction">
    <interactant intactId="EBI-11962760">
        <id>Q9NZV7</id>
    </interactant>
    <interactant intactId="EBI-740781">
        <id>Q9BT92</id>
        <label>TCHP</label>
    </interactant>
    <organismsDiffer>false</organismsDiffer>
    <experiments>3</experiments>
</comment>
<comment type="interaction">
    <interactant intactId="EBI-11962760">
        <id>Q9NZV7</id>
    </interactant>
    <interactant intactId="EBI-750487">
        <id>Q8WW24</id>
        <label>TEKT4</label>
    </interactant>
    <organismsDiffer>false</organismsDiffer>
    <experiments>3</experiments>
</comment>
<comment type="interaction">
    <interactant intactId="EBI-11962760">
        <id>Q9NZV7</id>
    </interactant>
    <interactant intactId="EBI-949753">
        <id>Q63HR2</id>
        <label>TNS2</label>
    </interactant>
    <organismsDiffer>false</organismsDiffer>
    <experiments>3</experiments>
</comment>
<comment type="interaction">
    <interactant intactId="EBI-11962760">
        <id>Q9NZV7</id>
    </interactant>
    <interactant intactId="EBI-9090990">
        <id>Q5W5X9-3</id>
        <label>TTC23</label>
    </interactant>
    <organismsDiffer>false</organismsDiffer>
    <experiments>3</experiments>
</comment>
<comment type="interaction">
    <interactant intactId="EBI-11962760">
        <id>Q9NZV7</id>
    </interactant>
    <interactant intactId="EBI-743272">
        <id>O75604</id>
        <label>USP2</label>
    </interactant>
    <organismsDiffer>false</organismsDiffer>
    <experiments>3</experiments>
</comment>
<comment type="interaction">
    <interactant intactId="EBI-11962760">
        <id>Q9NZV7</id>
    </interactant>
    <interactant intactId="EBI-20110775">
        <id>Q8NA42</id>
        <label>ZNF383</label>
    </interactant>
    <organismsDiffer>false</organismsDiffer>
    <experiments>3</experiments>
</comment>
<comment type="interaction">
    <interactant intactId="EBI-11962760">
        <id>Q9NZV7</id>
    </interactant>
    <interactant intactId="EBI-6427977">
        <id>Q96SQ5</id>
        <label>ZNF587</label>
    </interactant>
    <organismsDiffer>false</organismsDiffer>
    <experiments>3</experiments>
</comment>
<comment type="subcellular location">
    <subcellularLocation>
        <location evidence="4">Nucleus</location>
    </subcellularLocation>
</comment>
<comment type="tissue specificity">
    <text>Highest levels of expression in adult testis; modest levels in fetal kidney and brain.</text>
</comment>
<comment type="similarity">
    <text evidence="4">Belongs to the krueppel C2H2-type zinc-finger protein family.</text>
</comment>
<accession>Q9NZV7</accession>
<accession>Q2M3K1</accession>
<proteinExistence type="evidence at protein level"/>
<dbReference type="EMBL" id="AF166122">
    <property type="protein sequence ID" value="AAF61478.1"/>
    <property type="molecule type" value="mRNA"/>
</dbReference>
<dbReference type="EMBL" id="BC104876">
    <property type="protein sequence ID" value="AAI04877.1"/>
    <property type="molecule type" value="mRNA"/>
</dbReference>
<dbReference type="EMBL" id="BC104878">
    <property type="protein sequence ID" value="AAI04879.1"/>
    <property type="molecule type" value="mRNA"/>
</dbReference>
<dbReference type="CCDS" id="CCDS33123.1"/>
<dbReference type="RefSeq" id="NP_001139798.1">
    <property type="nucleotide sequence ID" value="NM_001146326.2"/>
</dbReference>
<dbReference type="RefSeq" id="NP_001139799.1">
    <property type="nucleotide sequence ID" value="NM_001146327.2"/>
</dbReference>
<dbReference type="RefSeq" id="NP_001356699.1">
    <property type="nucleotide sequence ID" value="NM_001369770.1"/>
</dbReference>
<dbReference type="RefSeq" id="NP_001356700.1">
    <property type="nucleotide sequence ID" value="NM_001369771.1"/>
</dbReference>
<dbReference type="RefSeq" id="NP_001356701.1">
    <property type="nucleotide sequence ID" value="NM_001369772.1"/>
</dbReference>
<dbReference type="RefSeq" id="NP_001374286.1">
    <property type="nucleotide sequence ID" value="NM_001387357.1"/>
</dbReference>
<dbReference type="RefSeq" id="NP_001374287.1">
    <property type="nucleotide sequence ID" value="NM_001387358.1"/>
</dbReference>
<dbReference type="RefSeq" id="NP_056178.3">
    <property type="nucleotide sequence ID" value="NM_015363.4"/>
</dbReference>
<dbReference type="SMR" id="Q9NZV7"/>
<dbReference type="BioGRID" id="117152">
    <property type="interactions" value="57"/>
</dbReference>
<dbReference type="FunCoup" id="Q9NZV7">
    <property type="interactions" value="4"/>
</dbReference>
<dbReference type="IntAct" id="Q9NZV7">
    <property type="interactions" value="51"/>
</dbReference>
<dbReference type="MINT" id="Q9NZV7"/>
<dbReference type="STRING" id="9606.ENSP00000486502"/>
<dbReference type="iPTMnet" id="Q9NZV7"/>
<dbReference type="PhosphoSitePlus" id="Q9NZV7"/>
<dbReference type="BioMuta" id="ZIM2"/>
<dbReference type="DMDM" id="20141058"/>
<dbReference type="MassIVE" id="Q9NZV7"/>
<dbReference type="PaxDb" id="9606-ENSP00000468984"/>
<dbReference type="PeptideAtlas" id="Q9NZV7"/>
<dbReference type="Antibodypedia" id="67536">
    <property type="antibodies" value="168 antibodies from 16 providers"/>
</dbReference>
<dbReference type="DNASU" id="23619"/>
<dbReference type="Ensembl" id="ENST00000593711.6">
    <property type="protein sequence ID" value="ENSP00000472306.1"/>
    <property type="gene ID" value="ENSG00000269699.8"/>
</dbReference>
<dbReference type="Ensembl" id="ENST00000599935.5">
    <property type="protein sequence ID" value="ENSP00000468984.1"/>
    <property type="gene ID" value="ENSG00000269699.8"/>
</dbReference>
<dbReference type="Ensembl" id="ENST00000601070.5">
    <property type="protein sequence ID" value="ENSP00000470326.1"/>
    <property type="gene ID" value="ENSG00000269699.8"/>
</dbReference>
<dbReference type="GeneID" id="23619"/>
<dbReference type="KEGG" id="hsa:23619"/>
<dbReference type="UCSC" id="uc002qnr.4">
    <property type="organism name" value="human"/>
</dbReference>
<dbReference type="AGR" id="HGNC:12875"/>
<dbReference type="CTD" id="23619"/>
<dbReference type="DisGeNET" id="23619"/>
<dbReference type="GeneCards" id="ZIM2"/>
<dbReference type="HGNC" id="HGNC:12875">
    <property type="gene designation" value="ZIM2"/>
</dbReference>
<dbReference type="HPA" id="ENSG00000269699">
    <property type="expression patterns" value="Tissue enhanced (ovary, testis)"/>
</dbReference>
<dbReference type="neXtProt" id="NX_Q9NZV7"/>
<dbReference type="OpenTargets" id="ENSG00000269699"/>
<dbReference type="PharmGKB" id="PA37464"/>
<dbReference type="VEuPathDB" id="HostDB:ENSG00000269699"/>
<dbReference type="eggNOG" id="KOG1721">
    <property type="taxonomic scope" value="Eukaryota"/>
</dbReference>
<dbReference type="GeneTree" id="ENSGT00940000163493"/>
<dbReference type="HOGENOM" id="CLU_525756_0_0_1"/>
<dbReference type="InParanoid" id="Q9NZV7"/>
<dbReference type="OMA" id="GKAFYLM"/>
<dbReference type="OrthoDB" id="9613619at2759"/>
<dbReference type="PAN-GO" id="Q9NZV7">
    <property type="GO annotations" value="3 GO annotations based on evolutionary models"/>
</dbReference>
<dbReference type="PhylomeDB" id="Q9NZV7"/>
<dbReference type="PathwayCommons" id="Q9NZV7"/>
<dbReference type="Reactome" id="R-HSA-212436">
    <property type="pathway name" value="Generic Transcription Pathway"/>
</dbReference>
<dbReference type="SignaLink" id="Q9NZV7"/>
<dbReference type="BioGRID-ORCS" id="23619">
    <property type="hits" value="6 hits in 1098 CRISPR screens"/>
</dbReference>
<dbReference type="ChiTaRS" id="ZIM2">
    <property type="organism name" value="human"/>
</dbReference>
<dbReference type="GenomeRNAi" id="23619"/>
<dbReference type="Pharos" id="Q9NZV7">
    <property type="development level" value="Tbio"/>
</dbReference>
<dbReference type="PRO" id="PR:Q9NZV7"/>
<dbReference type="Proteomes" id="UP000005640">
    <property type="component" value="Chromosome 19"/>
</dbReference>
<dbReference type="RNAct" id="Q9NZV7">
    <property type="molecule type" value="protein"/>
</dbReference>
<dbReference type="Bgee" id="ENSG00000269699">
    <property type="expression patterns" value="Expressed in oocyte and 127 other cell types or tissues"/>
</dbReference>
<dbReference type="ExpressionAtlas" id="Q9NZV7">
    <property type="expression patterns" value="baseline and differential"/>
</dbReference>
<dbReference type="GO" id="GO:0005634">
    <property type="term" value="C:nucleus"/>
    <property type="evidence" value="ECO:0007669"/>
    <property type="project" value="UniProtKB-SubCell"/>
</dbReference>
<dbReference type="GO" id="GO:0003677">
    <property type="term" value="F:DNA binding"/>
    <property type="evidence" value="ECO:0007669"/>
    <property type="project" value="UniProtKB-KW"/>
</dbReference>
<dbReference type="GO" id="GO:0003700">
    <property type="term" value="F:DNA-binding transcription factor activity"/>
    <property type="evidence" value="ECO:0000303"/>
    <property type="project" value="ARUK-UCL"/>
</dbReference>
<dbReference type="GO" id="GO:0008270">
    <property type="term" value="F:zinc ion binding"/>
    <property type="evidence" value="ECO:0000303"/>
    <property type="project" value="UniProtKB"/>
</dbReference>
<dbReference type="GO" id="GO:0006355">
    <property type="term" value="P:regulation of DNA-templated transcription"/>
    <property type="evidence" value="ECO:0000303"/>
    <property type="project" value="UniProtKB"/>
</dbReference>
<dbReference type="GO" id="GO:0006357">
    <property type="term" value="P:regulation of transcription by RNA polymerase II"/>
    <property type="evidence" value="ECO:0000303"/>
    <property type="project" value="ARUK-UCL"/>
</dbReference>
<dbReference type="CDD" id="cd07765">
    <property type="entry name" value="KRAB_A-box"/>
    <property type="match status" value="1"/>
</dbReference>
<dbReference type="FunFam" id="3.30.160.60:FF:000965">
    <property type="entry name" value="Neurotrophin receptor-interacting factor homolog"/>
    <property type="match status" value="1"/>
</dbReference>
<dbReference type="FunFam" id="3.30.160.60:FF:002860">
    <property type="entry name" value="Zinc finger imprinted 2"/>
    <property type="match status" value="1"/>
</dbReference>
<dbReference type="FunFam" id="3.30.160.60:FF:003112">
    <property type="entry name" value="Zinc finger imprinted 2"/>
    <property type="match status" value="1"/>
</dbReference>
<dbReference type="FunFam" id="3.30.160.60:FF:003126">
    <property type="entry name" value="Zinc finger imprinted 2"/>
    <property type="match status" value="1"/>
</dbReference>
<dbReference type="FunFam" id="3.30.160.60:FF:003501">
    <property type="entry name" value="Zinc finger imprinted 2"/>
    <property type="match status" value="1"/>
</dbReference>
<dbReference type="Gene3D" id="6.10.140.140">
    <property type="match status" value="1"/>
</dbReference>
<dbReference type="Gene3D" id="3.30.160.60">
    <property type="entry name" value="Classic Zinc Finger"/>
    <property type="match status" value="5"/>
</dbReference>
<dbReference type="InterPro" id="IPR001909">
    <property type="entry name" value="KRAB"/>
</dbReference>
<dbReference type="InterPro" id="IPR036051">
    <property type="entry name" value="KRAB_dom_sf"/>
</dbReference>
<dbReference type="InterPro" id="IPR036236">
    <property type="entry name" value="Znf_C2H2_sf"/>
</dbReference>
<dbReference type="InterPro" id="IPR013087">
    <property type="entry name" value="Znf_C2H2_type"/>
</dbReference>
<dbReference type="PANTHER" id="PTHR24381:SF393">
    <property type="entry name" value="CHROMATIN-LINKED ADAPTOR FOR MSL PROTEINS, ISOFORM B"/>
    <property type="match status" value="1"/>
</dbReference>
<dbReference type="PANTHER" id="PTHR24381">
    <property type="entry name" value="ZINC FINGER PROTEIN"/>
    <property type="match status" value="1"/>
</dbReference>
<dbReference type="Pfam" id="PF01352">
    <property type="entry name" value="KRAB"/>
    <property type="match status" value="1"/>
</dbReference>
<dbReference type="Pfam" id="PF00096">
    <property type="entry name" value="zf-C2H2"/>
    <property type="match status" value="2"/>
</dbReference>
<dbReference type="Pfam" id="PF13894">
    <property type="entry name" value="zf-C2H2_4"/>
    <property type="match status" value="1"/>
</dbReference>
<dbReference type="SMART" id="SM00349">
    <property type="entry name" value="KRAB"/>
    <property type="match status" value="1"/>
</dbReference>
<dbReference type="SMART" id="SM00355">
    <property type="entry name" value="ZnF_C2H2"/>
    <property type="match status" value="5"/>
</dbReference>
<dbReference type="SUPFAM" id="SSF57667">
    <property type="entry name" value="beta-beta-alpha zinc fingers"/>
    <property type="match status" value="3"/>
</dbReference>
<dbReference type="SUPFAM" id="SSF109640">
    <property type="entry name" value="KRAB domain (Kruppel-associated box)"/>
    <property type="match status" value="1"/>
</dbReference>
<dbReference type="PROSITE" id="PS50805">
    <property type="entry name" value="KRAB"/>
    <property type="match status" value="1"/>
</dbReference>
<dbReference type="PROSITE" id="PS00028">
    <property type="entry name" value="ZINC_FINGER_C2H2_1"/>
    <property type="match status" value="5"/>
</dbReference>
<dbReference type="PROSITE" id="PS50157">
    <property type="entry name" value="ZINC_FINGER_C2H2_2"/>
    <property type="match status" value="5"/>
</dbReference>
<gene>
    <name type="primary">ZIM2</name>
    <name type="synonym">ZNF656</name>
</gene>
<protein>
    <recommendedName>
        <fullName>Zinc finger imprinted 2</fullName>
    </recommendedName>
    <alternativeName>
        <fullName>Zinc finger protein 656</fullName>
    </alternativeName>
</protein>
<sequence length="527" mass="61164">MYQPEDDNNSDVTSDDDMTRNRRESSPPHSVHSFSGDRDWDRRGRSRDMEPRDRWSHTRNPRSRMPPRDLSLPVVAKTSFEMDREDDRDSRAYESRSQDAESYQNVVDLAEDRKPHNTIQDNMENYRKLLSLGFLAQDSVPAEKRNTEMLDNLPSAGSQFPDFKHLGTFLVFEELVTFEDVLVDFSPEELSSLSAAQRNLYREVMLENYRNLVSLGHQFSKPDIISRLEEEESYAMETDSRHTVICQGESHDDPLEPHQGNQEKLLTPITMNDPKTLTPERSYGSDEFERSSNLSKQSKDPLGKDPQEGTAPGICTSPQSASQENKHNRCEFCKRTFSTQVALRRHERIHTGKKPYECKQCAEAFYLMPHLNRHQKTHSGRKTSGCNEGRKPSVQCANLCERVRIHSQEDYFECFQCGKAFLQNVHLLQHLKAHEAARVLPPGLSHSKTYLIRYQRKHDYVGERACQCCDCGRVFSRNSYLIQHYRTHTQERPYQCQLCGKCFGRPSYLTQHYQLHSQEKTVECDHC</sequence>
<evidence type="ECO:0000255" key="1">
    <source>
        <dbReference type="PROSITE-ProRule" id="PRU00042"/>
    </source>
</evidence>
<evidence type="ECO:0000255" key="2">
    <source>
        <dbReference type="PROSITE-ProRule" id="PRU00119"/>
    </source>
</evidence>
<evidence type="ECO:0000256" key="3">
    <source>
        <dbReference type="SAM" id="MobiDB-lite"/>
    </source>
</evidence>
<evidence type="ECO:0000305" key="4"/>
<name>ZIM2_HUMAN</name>
<reference key="1">
    <citation type="journal article" date="2000" name="Genomics">
        <title>Exon sharing of a novel human zinc-finger gene, ZIM2, and paternally expressed gene 3 (PEG3).</title>
        <authorList>
            <person name="Kim J."/>
            <person name="Bergmann A."/>
            <person name="Stubbs L."/>
        </authorList>
    </citation>
    <scope>NUCLEOTIDE SEQUENCE [MRNA]</scope>
</reference>
<reference key="2">
    <citation type="journal article" date="2004" name="Genome Res.">
        <title>The status, quality, and expansion of the NIH full-length cDNA project: the Mammalian Gene Collection (MGC).</title>
        <authorList>
            <consortium name="The MGC Project Team"/>
        </authorList>
    </citation>
    <scope>NUCLEOTIDE SEQUENCE [LARGE SCALE MRNA]</scope>
    <source>
        <tissue>Brain</tissue>
    </source>
</reference>
<organism>
    <name type="scientific">Homo sapiens</name>
    <name type="common">Human</name>
    <dbReference type="NCBI Taxonomy" id="9606"/>
    <lineage>
        <taxon>Eukaryota</taxon>
        <taxon>Metazoa</taxon>
        <taxon>Chordata</taxon>
        <taxon>Craniata</taxon>
        <taxon>Vertebrata</taxon>
        <taxon>Euteleostomi</taxon>
        <taxon>Mammalia</taxon>
        <taxon>Eutheria</taxon>
        <taxon>Euarchontoglires</taxon>
        <taxon>Primates</taxon>
        <taxon>Haplorrhini</taxon>
        <taxon>Catarrhini</taxon>
        <taxon>Hominidae</taxon>
        <taxon>Homo</taxon>
    </lineage>
</organism>
<keyword id="KW-0238">DNA-binding</keyword>
<keyword id="KW-0479">Metal-binding</keyword>
<keyword id="KW-0539">Nucleus</keyword>
<keyword id="KW-1267">Proteomics identification</keyword>
<keyword id="KW-1185">Reference proteome</keyword>
<keyword id="KW-0677">Repeat</keyword>
<keyword id="KW-0804">Transcription</keyword>
<keyword id="KW-0805">Transcription regulation</keyword>
<keyword id="KW-0862">Zinc</keyword>
<keyword id="KW-0863">Zinc-finger</keyword>